<name>MPP10_YEAST</name>
<dbReference type="EMBL" id="X87611">
    <property type="protein sequence ID" value="CAA60923.1"/>
    <property type="molecule type" value="Genomic_DNA"/>
</dbReference>
<dbReference type="EMBL" id="Z49502">
    <property type="protein sequence ID" value="CAA89524.1"/>
    <property type="molecule type" value="Genomic_DNA"/>
</dbReference>
<dbReference type="EMBL" id="BK006943">
    <property type="protein sequence ID" value="DAA08792.1"/>
    <property type="molecule type" value="Genomic_DNA"/>
</dbReference>
<dbReference type="PIR" id="S55189">
    <property type="entry name" value="S55189"/>
</dbReference>
<dbReference type="RefSeq" id="NP_012535.3">
    <property type="nucleotide sequence ID" value="NM_001181659.3"/>
</dbReference>
<dbReference type="PDB" id="5WLC">
    <property type="method" value="EM"/>
    <property type="resolution" value="3.80 A"/>
    <property type="chains" value="NA=1-593"/>
</dbReference>
<dbReference type="PDB" id="5WXM">
    <property type="method" value="X-ray"/>
    <property type="resolution" value="2.30 A"/>
    <property type="chains" value="U/V=430-461"/>
</dbReference>
<dbReference type="PDB" id="5WYJ">
    <property type="method" value="EM"/>
    <property type="resolution" value="8.70 A"/>
    <property type="chains" value="MC=429-593"/>
</dbReference>
<dbReference type="PDB" id="5WYK">
    <property type="method" value="EM"/>
    <property type="resolution" value="4.50 A"/>
    <property type="chains" value="MC=429-593"/>
</dbReference>
<dbReference type="PDB" id="6KE6">
    <property type="method" value="EM"/>
    <property type="resolution" value="3.40 A"/>
    <property type="chains" value="5E=1-593"/>
</dbReference>
<dbReference type="PDB" id="6LQP">
    <property type="method" value="EM"/>
    <property type="resolution" value="3.20 A"/>
    <property type="chains" value="5E=1-593"/>
</dbReference>
<dbReference type="PDB" id="6LQQ">
    <property type="method" value="EM"/>
    <property type="resolution" value="4.10 A"/>
    <property type="chains" value="5E=1-593"/>
</dbReference>
<dbReference type="PDB" id="6LQR">
    <property type="method" value="EM"/>
    <property type="resolution" value="8.60 A"/>
    <property type="chains" value="5E=1-593"/>
</dbReference>
<dbReference type="PDB" id="6LQS">
    <property type="method" value="EM"/>
    <property type="resolution" value="3.80 A"/>
    <property type="chains" value="5E=1-593"/>
</dbReference>
<dbReference type="PDB" id="6LQT">
    <property type="method" value="EM"/>
    <property type="resolution" value="4.90 A"/>
    <property type="chains" value="5E=1-593"/>
</dbReference>
<dbReference type="PDB" id="6LQU">
    <property type="method" value="EM"/>
    <property type="resolution" value="3.70 A"/>
    <property type="chains" value="5E=1-593"/>
</dbReference>
<dbReference type="PDB" id="6LQV">
    <property type="method" value="EM"/>
    <property type="resolution" value="4.80 A"/>
    <property type="chains" value="5E=1-593"/>
</dbReference>
<dbReference type="PDB" id="6ND4">
    <property type="method" value="EM"/>
    <property type="resolution" value="4.30 A"/>
    <property type="chains" value="A=1-593"/>
</dbReference>
<dbReference type="PDB" id="6ZQA">
    <property type="method" value="EM"/>
    <property type="resolution" value="4.40 A"/>
    <property type="chains" value="CK=1-593"/>
</dbReference>
<dbReference type="PDB" id="6ZQB">
    <property type="method" value="EM"/>
    <property type="resolution" value="3.90 A"/>
    <property type="chains" value="CK=1-593"/>
</dbReference>
<dbReference type="PDB" id="6ZQC">
    <property type="method" value="EM"/>
    <property type="resolution" value="3.80 A"/>
    <property type="chains" value="CK=1-593"/>
</dbReference>
<dbReference type="PDB" id="6ZQD">
    <property type="method" value="EM"/>
    <property type="resolution" value="3.80 A"/>
    <property type="chains" value="CK=1-593"/>
</dbReference>
<dbReference type="PDB" id="6ZQE">
    <property type="method" value="EM"/>
    <property type="resolution" value="7.10 A"/>
    <property type="chains" value="CK=1-593"/>
</dbReference>
<dbReference type="PDB" id="6ZQF">
    <property type="method" value="EM"/>
    <property type="resolution" value="4.90 A"/>
    <property type="chains" value="CK=1-593"/>
</dbReference>
<dbReference type="PDB" id="6ZQG">
    <property type="method" value="EM"/>
    <property type="resolution" value="3.50 A"/>
    <property type="chains" value="CK=1-593"/>
</dbReference>
<dbReference type="PDB" id="7AJT">
    <property type="method" value="EM"/>
    <property type="resolution" value="4.60 A"/>
    <property type="chains" value="CK=1-593"/>
</dbReference>
<dbReference type="PDB" id="7AJU">
    <property type="method" value="EM"/>
    <property type="resolution" value="3.80 A"/>
    <property type="chains" value="CK=1-593"/>
</dbReference>
<dbReference type="PDB" id="7D4I">
    <property type="method" value="EM"/>
    <property type="resolution" value="4.00 A"/>
    <property type="chains" value="5E=1-593"/>
</dbReference>
<dbReference type="PDB" id="7D5S">
    <property type="method" value="EM"/>
    <property type="resolution" value="4.60 A"/>
    <property type="chains" value="5E=1-593"/>
</dbReference>
<dbReference type="PDB" id="7D5T">
    <property type="method" value="EM"/>
    <property type="resolution" value="6.00 A"/>
    <property type="chains" value="5E=1-593"/>
</dbReference>
<dbReference type="PDB" id="7D63">
    <property type="method" value="EM"/>
    <property type="resolution" value="12.30 A"/>
    <property type="chains" value="5E=1-593"/>
</dbReference>
<dbReference type="PDB" id="7SUK">
    <property type="method" value="EM"/>
    <property type="resolution" value="3.99 A"/>
    <property type="chains" value="NA=295-539"/>
</dbReference>
<dbReference type="PDB" id="7WTL">
    <property type="method" value="EM"/>
    <property type="resolution" value="3.30 A"/>
    <property type="chains" value="CK=1-593"/>
</dbReference>
<dbReference type="PDBsum" id="5WLC"/>
<dbReference type="PDBsum" id="5WXM"/>
<dbReference type="PDBsum" id="5WYJ"/>
<dbReference type="PDBsum" id="5WYK"/>
<dbReference type="PDBsum" id="6KE6"/>
<dbReference type="PDBsum" id="6LQP"/>
<dbReference type="PDBsum" id="6LQQ"/>
<dbReference type="PDBsum" id="6LQR"/>
<dbReference type="PDBsum" id="6LQS"/>
<dbReference type="PDBsum" id="6LQT"/>
<dbReference type="PDBsum" id="6LQU"/>
<dbReference type="PDBsum" id="6LQV"/>
<dbReference type="PDBsum" id="6ND4"/>
<dbReference type="PDBsum" id="6ZQA"/>
<dbReference type="PDBsum" id="6ZQB"/>
<dbReference type="PDBsum" id="6ZQC"/>
<dbReference type="PDBsum" id="6ZQD"/>
<dbReference type="PDBsum" id="6ZQE"/>
<dbReference type="PDBsum" id="6ZQF"/>
<dbReference type="PDBsum" id="6ZQG"/>
<dbReference type="PDBsum" id="7AJT"/>
<dbReference type="PDBsum" id="7AJU"/>
<dbReference type="PDBsum" id="7D4I"/>
<dbReference type="PDBsum" id="7D5S"/>
<dbReference type="PDBsum" id="7D5T"/>
<dbReference type="PDBsum" id="7D63"/>
<dbReference type="PDBsum" id="7SUK"/>
<dbReference type="PDBsum" id="7WTL"/>
<dbReference type="EMDB" id="EMD-0441"/>
<dbReference type="EMDB" id="EMD-0949"/>
<dbReference type="EMDB" id="EMD-0950"/>
<dbReference type="EMDB" id="EMD-0951"/>
<dbReference type="EMDB" id="EMD-0952"/>
<dbReference type="EMDB" id="EMD-0953"/>
<dbReference type="EMDB" id="EMD-0954"/>
<dbReference type="EMDB" id="EMD-0955"/>
<dbReference type="EMDB" id="EMD-11357"/>
<dbReference type="EMDB" id="EMD-11358"/>
<dbReference type="EMDB" id="EMD-11359"/>
<dbReference type="EMDB" id="EMD-11360"/>
<dbReference type="EMDB" id="EMD-11361"/>
<dbReference type="EMDB" id="EMD-11362"/>
<dbReference type="EMDB" id="EMD-11363"/>
<dbReference type="EMDB" id="EMD-11807"/>
<dbReference type="EMDB" id="EMD-11808"/>
<dbReference type="EMDB" id="EMD-25441"/>
<dbReference type="EMDB" id="EMD-30574"/>
<dbReference type="EMDB" id="EMD-30584"/>
<dbReference type="EMDB" id="EMD-30585"/>
<dbReference type="EMDB" id="EMD-30588"/>
<dbReference type="EMDB" id="EMD-32790"/>
<dbReference type="EMDB" id="EMD-6695"/>
<dbReference type="EMDB" id="EMD-6696"/>
<dbReference type="EMDB" id="EMD-8859"/>
<dbReference type="EMDB" id="EMD-9964"/>
<dbReference type="SMR" id="P47083"/>
<dbReference type="BioGRID" id="33758">
    <property type="interactions" value="171"/>
</dbReference>
<dbReference type="ComplexPortal" id="CPX-1893">
    <property type="entry name" value="MPP10 complex"/>
</dbReference>
<dbReference type="DIP" id="DIP-4363N"/>
<dbReference type="FunCoup" id="P47083">
    <property type="interactions" value="1141"/>
</dbReference>
<dbReference type="IntAct" id="P47083">
    <property type="interactions" value="86"/>
</dbReference>
<dbReference type="MINT" id="P47083"/>
<dbReference type="STRING" id="4932.YJR002W"/>
<dbReference type="iPTMnet" id="P47083"/>
<dbReference type="PaxDb" id="4932-YJR002W"/>
<dbReference type="PeptideAtlas" id="P47083"/>
<dbReference type="EnsemblFungi" id="YJR002W_mRNA">
    <property type="protein sequence ID" value="YJR002W"/>
    <property type="gene ID" value="YJR002W"/>
</dbReference>
<dbReference type="GeneID" id="853458"/>
<dbReference type="KEGG" id="sce:YJR002W"/>
<dbReference type="AGR" id="SGD:S000003762"/>
<dbReference type="SGD" id="S000003762">
    <property type="gene designation" value="MPP10"/>
</dbReference>
<dbReference type="VEuPathDB" id="FungiDB:YJR002W"/>
<dbReference type="eggNOG" id="KOG2600">
    <property type="taxonomic scope" value="Eukaryota"/>
</dbReference>
<dbReference type="GeneTree" id="ENSGT00990000209865"/>
<dbReference type="HOGENOM" id="CLU_011271_1_0_1"/>
<dbReference type="InParanoid" id="P47083"/>
<dbReference type="OMA" id="HFAEDFG"/>
<dbReference type="OrthoDB" id="445326at2759"/>
<dbReference type="BioCyc" id="YEAST:G3O-31648-MONOMER"/>
<dbReference type="Reactome" id="R-SCE-6791226">
    <property type="pathway name" value="Major pathway of rRNA processing in the nucleolus and cytosol"/>
</dbReference>
<dbReference type="BioGRID-ORCS" id="853458">
    <property type="hits" value="3 hits in 10 CRISPR screens"/>
</dbReference>
<dbReference type="CD-CODE" id="BDAE0F88">
    <property type="entry name" value="Nucleolus"/>
</dbReference>
<dbReference type="PRO" id="PR:P47083"/>
<dbReference type="Proteomes" id="UP000002311">
    <property type="component" value="Chromosome X"/>
</dbReference>
<dbReference type="RNAct" id="P47083">
    <property type="molecule type" value="protein"/>
</dbReference>
<dbReference type="GO" id="GO:0030686">
    <property type="term" value="C:90S preribosome"/>
    <property type="evidence" value="ECO:0007005"/>
    <property type="project" value="SGD"/>
</dbReference>
<dbReference type="GO" id="GO:0034457">
    <property type="term" value="C:Mpp10 complex"/>
    <property type="evidence" value="ECO:0000314"/>
    <property type="project" value="SGD"/>
</dbReference>
<dbReference type="GO" id="GO:0005730">
    <property type="term" value="C:nucleolus"/>
    <property type="evidence" value="ECO:0000314"/>
    <property type="project" value="ComplexPortal"/>
</dbReference>
<dbReference type="GO" id="GO:0005654">
    <property type="term" value="C:nucleoplasm"/>
    <property type="evidence" value="ECO:0000304"/>
    <property type="project" value="Reactome"/>
</dbReference>
<dbReference type="GO" id="GO:0005634">
    <property type="term" value="C:nucleus"/>
    <property type="evidence" value="ECO:0007005"/>
    <property type="project" value="SGD"/>
</dbReference>
<dbReference type="GO" id="GO:0032040">
    <property type="term" value="C:small-subunit processome"/>
    <property type="evidence" value="ECO:0000314"/>
    <property type="project" value="SGD"/>
</dbReference>
<dbReference type="GO" id="GO:0005732">
    <property type="term" value="C:sno(s)RNA-containing ribonucleoprotein complex"/>
    <property type="evidence" value="ECO:0007669"/>
    <property type="project" value="InterPro"/>
</dbReference>
<dbReference type="GO" id="GO:0042802">
    <property type="term" value="F:identical protein binding"/>
    <property type="evidence" value="ECO:0000353"/>
    <property type="project" value="IntAct"/>
</dbReference>
<dbReference type="GO" id="GO:0000480">
    <property type="term" value="P:endonucleolytic cleavage in 5'-ETS of tricistronic rRNA transcript (SSU-rRNA, 5.8S rRNA, LSU-rRNA)"/>
    <property type="evidence" value="ECO:0000315"/>
    <property type="project" value="SGD"/>
</dbReference>
<dbReference type="GO" id="GO:0000447">
    <property type="term" value="P:endonucleolytic cleavage in ITS1 to separate SSU-rRNA from 5.8S rRNA and LSU-rRNA from tricistronic rRNA transcript (SSU-rRNA, 5.8S rRNA, LSU-rRNA)"/>
    <property type="evidence" value="ECO:0000315"/>
    <property type="project" value="SGD"/>
</dbReference>
<dbReference type="GO" id="GO:0000472">
    <property type="term" value="P:endonucleolytic cleavage to generate mature 5'-end of SSU-rRNA from (SSU-rRNA, 5.8S rRNA, LSU-rRNA)"/>
    <property type="evidence" value="ECO:0000315"/>
    <property type="project" value="SGD"/>
</dbReference>
<dbReference type="GO" id="GO:0030490">
    <property type="term" value="P:maturation of SSU-rRNA"/>
    <property type="evidence" value="ECO:0000303"/>
    <property type="project" value="ComplexPortal"/>
</dbReference>
<dbReference type="InterPro" id="IPR012173">
    <property type="entry name" value="Mpp10"/>
</dbReference>
<dbReference type="PANTHER" id="PTHR17039">
    <property type="entry name" value="U3 SMALL NUCLEOLAR RIBONUCLEOPROTEIN PROTEIN MPP10"/>
    <property type="match status" value="1"/>
</dbReference>
<dbReference type="PANTHER" id="PTHR17039:SF0">
    <property type="entry name" value="U3 SMALL NUCLEOLAR RIBONUCLEOPROTEIN PROTEIN MPP10"/>
    <property type="match status" value="1"/>
</dbReference>
<dbReference type="Pfam" id="PF04006">
    <property type="entry name" value="Mpp10"/>
    <property type="match status" value="1"/>
</dbReference>
<dbReference type="PIRSF" id="PIRSF017300">
    <property type="entry name" value="snoRNP_Mpp10"/>
    <property type="match status" value="1"/>
</dbReference>
<organism>
    <name type="scientific">Saccharomyces cerevisiae (strain ATCC 204508 / S288c)</name>
    <name type="common">Baker's yeast</name>
    <dbReference type="NCBI Taxonomy" id="559292"/>
    <lineage>
        <taxon>Eukaryota</taxon>
        <taxon>Fungi</taxon>
        <taxon>Dikarya</taxon>
        <taxon>Ascomycota</taxon>
        <taxon>Saccharomycotina</taxon>
        <taxon>Saccharomycetes</taxon>
        <taxon>Saccharomycetales</taxon>
        <taxon>Saccharomycetaceae</taxon>
        <taxon>Saccharomyces</taxon>
    </lineage>
</organism>
<reference key="1">
    <citation type="journal article" date="1996" name="EMBO J.">
        <title>Complete nucleotide sequence of Saccharomyces cerevisiae chromosome X.</title>
        <authorList>
            <person name="Galibert F."/>
            <person name="Alexandraki D."/>
            <person name="Baur A."/>
            <person name="Boles E."/>
            <person name="Chalwatzis N."/>
            <person name="Chuat J.-C."/>
            <person name="Coster F."/>
            <person name="Cziepluch C."/>
            <person name="de Haan M."/>
            <person name="Domdey H."/>
            <person name="Durand P."/>
            <person name="Entian K.-D."/>
            <person name="Gatius M."/>
            <person name="Goffeau A."/>
            <person name="Grivell L.A."/>
            <person name="Hennemann A."/>
            <person name="Herbert C.J."/>
            <person name="Heumann K."/>
            <person name="Hilger F."/>
            <person name="Hollenberg C.P."/>
            <person name="Huang M.-E."/>
            <person name="Jacq C."/>
            <person name="Jauniaux J.-C."/>
            <person name="Katsoulou C."/>
            <person name="Kirchrath L."/>
            <person name="Kleine K."/>
            <person name="Kordes E."/>
            <person name="Koetter P."/>
            <person name="Liebl S."/>
            <person name="Louis E.J."/>
            <person name="Manus V."/>
            <person name="Mewes H.-W."/>
            <person name="Miosga T."/>
            <person name="Obermaier B."/>
            <person name="Perea J."/>
            <person name="Pohl T.M."/>
            <person name="Portetelle D."/>
            <person name="Pujol A."/>
            <person name="Purnelle B."/>
            <person name="Ramezani Rad M."/>
            <person name="Rasmussen S.W."/>
            <person name="Rose M."/>
            <person name="Rossau R."/>
            <person name="Schaaff-Gerstenschlaeger I."/>
            <person name="Smits P.H.M."/>
            <person name="Scarcez T."/>
            <person name="Soriano N."/>
            <person name="To Van D."/>
            <person name="Tzermia M."/>
            <person name="Van Broekhoven A."/>
            <person name="Vandenbol M."/>
            <person name="Wedler H."/>
            <person name="von Wettstein D."/>
            <person name="Wambutt R."/>
            <person name="Zagulski M."/>
            <person name="Zollner A."/>
            <person name="Karpfinger-Hartl L."/>
        </authorList>
    </citation>
    <scope>NUCLEOTIDE SEQUENCE [LARGE SCALE GENOMIC DNA]</scope>
    <source>
        <strain>ATCC 204508 / S288c</strain>
    </source>
</reference>
<reference key="2">
    <citation type="journal article" date="2014" name="G3 (Bethesda)">
        <title>The reference genome sequence of Saccharomyces cerevisiae: Then and now.</title>
        <authorList>
            <person name="Engel S.R."/>
            <person name="Dietrich F.S."/>
            <person name="Fisk D.G."/>
            <person name="Binkley G."/>
            <person name="Balakrishnan R."/>
            <person name="Costanzo M.C."/>
            <person name="Dwight S.S."/>
            <person name="Hitz B.C."/>
            <person name="Karra K."/>
            <person name="Nash R.S."/>
            <person name="Weng S."/>
            <person name="Wong E.D."/>
            <person name="Lloyd P."/>
            <person name="Skrzypek M.S."/>
            <person name="Miyasato S.R."/>
            <person name="Simison M."/>
            <person name="Cherry J.M."/>
        </authorList>
    </citation>
    <scope>GENOME REANNOTATION</scope>
    <source>
        <strain>ATCC 204508 / S288c</strain>
    </source>
</reference>
<reference key="3">
    <citation type="journal article" date="1997" name="Mol. Cell. Biol.">
        <title>Mpp10p, a U3 small nucleolar ribonucleoprotein component required for pre-18S rRNA processing in yeast.</title>
        <authorList>
            <person name="Dunbar D.A."/>
            <person name="Wormsley S."/>
            <person name="Agentis T.M."/>
            <person name="Baserga S.J."/>
        </authorList>
    </citation>
    <scope>FUNCTION</scope>
    <scope>SUBCELLULAR LOCATION</scope>
</reference>
<reference key="4">
    <citation type="journal article" date="2002" name="Nature">
        <title>A large nucleolar U3 ribonucleoprotein required for 18S ribosomal RNA biogenesis.</title>
        <authorList>
            <person name="Dragon F."/>
            <person name="Gallagher J.E.G."/>
            <person name="Compagnone-Post P.A."/>
            <person name="Mitchell B.M."/>
            <person name="Porwancher K.A."/>
            <person name="Wehner K.A."/>
            <person name="Wormsley S."/>
            <person name="Settlage R.E."/>
            <person name="Shabanowitz J."/>
            <person name="Osheim Y."/>
            <person name="Beyer A.L."/>
            <person name="Hunt D.F."/>
            <person name="Baserga S.J."/>
        </authorList>
    </citation>
    <scope>INTERACTION WITH NOP1; RRP5; UTP1-UTP17 AND SNORNA U3</scope>
    <scope>SUBCELLULAR LOCATION</scope>
    <scope>IDENTIFICATION IN SSU PROCESSOME BY MASS SPECTROMETRY</scope>
</reference>
<reference key="5">
    <citation type="journal article" date="2004" name="Eukaryot. Cell">
        <title>The small-subunit processome is a ribosome assembly intermediate.</title>
        <authorList>
            <person name="Bernstein K.A."/>
            <person name="Gallagher J.E.G."/>
            <person name="Mitchell B.M."/>
            <person name="Granneman S."/>
            <person name="Baserga S.J."/>
        </authorList>
    </citation>
    <scope>INTERACTION WITH EMG1; KRR1; NOC4; RPS4A; RPS4B; RPS6A; RPS6B; RPS7A; RPS7B; RPS9A; RPS9B; RPS14A; RPS14B; UTP18; UTP20; UTP21 AND UTP22</scope>
</reference>
<reference key="6">
    <citation type="journal article" date="2004" name="Proc. Natl. Acad. Sci. U.S.A.">
        <title>Imp3p and Imp4p mediate formation of essential U3-precursor rRNA (pre-rRNA) duplexes, possibly to recruit the small subunit processome to the pre-rRNA.</title>
        <authorList>
            <person name="Gerczei T."/>
            <person name="Correll C.C."/>
        </authorList>
    </citation>
    <scope>FUNCTION</scope>
    <scope>INTERACTION WITH IMP3 AND IMP4</scope>
</reference>
<reference key="7">
    <citation type="journal article" date="2007" name="J. Proteome Res.">
        <title>Large-scale phosphorylation analysis of alpha-factor-arrested Saccharomyces cerevisiae.</title>
        <authorList>
            <person name="Li X."/>
            <person name="Gerber S.A."/>
            <person name="Rudner A.D."/>
            <person name="Beausoleil S.A."/>
            <person name="Haas W."/>
            <person name="Villen J."/>
            <person name="Elias J.E."/>
            <person name="Gygi S.P."/>
        </authorList>
    </citation>
    <scope>PHOSPHORYLATION [LARGE SCALE ANALYSIS] AT SER-176 AND SER-177</scope>
    <scope>IDENTIFICATION BY MASS SPECTROMETRY [LARGE SCALE ANALYSIS]</scope>
    <source>
        <strain>ADR376</strain>
    </source>
</reference>
<reference key="8">
    <citation type="journal article" date="2007" name="Proc. Natl. Acad. Sci. U.S.A.">
        <title>Analysis of phosphorylation sites on proteins from Saccharomyces cerevisiae by electron transfer dissociation (ETD) mass spectrometry.</title>
        <authorList>
            <person name="Chi A."/>
            <person name="Huttenhower C."/>
            <person name="Geer L.Y."/>
            <person name="Coon J.J."/>
            <person name="Syka J.E.P."/>
            <person name="Bai D.L."/>
            <person name="Shabanowitz J."/>
            <person name="Burke D.J."/>
            <person name="Troyanskaya O.G."/>
            <person name="Hunt D.F."/>
        </authorList>
    </citation>
    <scope>IDENTIFICATION BY MASS SPECTROMETRY [LARGE SCALE ANALYSIS]</scope>
</reference>
<reference key="9">
    <citation type="journal article" date="2008" name="Mol. Cell. Proteomics">
        <title>A multidimensional chromatography technology for in-depth phosphoproteome analysis.</title>
        <authorList>
            <person name="Albuquerque C.P."/>
            <person name="Smolka M.B."/>
            <person name="Payne S.H."/>
            <person name="Bafna V."/>
            <person name="Eng J."/>
            <person name="Zhou H."/>
        </authorList>
    </citation>
    <scope>PHOSPHORYLATION [LARGE SCALE ANALYSIS] AT SER-176 AND SER-177</scope>
    <scope>IDENTIFICATION BY MASS SPECTROMETRY [LARGE SCALE ANALYSIS]</scope>
</reference>
<reference key="10">
    <citation type="journal article" date="2009" name="Science">
        <title>Global analysis of Cdk1 substrate phosphorylation sites provides insights into evolution.</title>
        <authorList>
            <person name="Holt L.J."/>
            <person name="Tuch B.B."/>
            <person name="Villen J."/>
            <person name="Johnson A.D."/>
            <person name="Gygi S.P."/>
            <person name="Morgan D.O."/>
        </authorList>
    </citation>
    <scope>PHOSPHORYLATION [LARGE SCALE ANALYSIS] AT SER-176; SER-177 AND TYR-181</scope>
    <scope>IDENTIFICATION BY MASS SPECTROMETRY [LARGE SCALE ANALYSIS]</scope>
</reference>
<reference key="11">
    <citation type="journal article" date="2010" name="RNA">
        <title>The DEAD-box RNA helicase-like Utp25 is an SSU processome component.</title>
        <authorList>
            <person name="Charette J.M."/>
            <person name="Baserga S.J."/>
        </authorList>
    </citation>
    <scope>INTERACTION WITH UTP25</scope>
</reference>
<reference key="12">
    <citation type="journal article" date="2012" name="Proc. Natl. Acad. Sci. U.S.A.">
        <title>N-terminal acetylome analyses and functional insights of the N-terminal acetyltransferase NatB.</title>
        <authorList>
            <person name="Van Damme P."/>
            <person name="Lasa M."/>
            <person name="Polevoda B."/>
            <person name="Gazquez C."/>
            <person name="Elosegui-Artola A."/>
            <person name="Kim D.S."/>
            <person name="De Juan-Pardo E."/>
            <person name="Demeyer K."/>
            <person name="Hole K."/>
            <person name="Larrea E."/>
            <person name="Timmerman E."/>
            <person name="Prieto J."/>
            <person name="Arnesen T."/>
            <person name="Sherman F."/>
            <person name="Gevaert K."/>
            <person name="Aldabe R."/>
        </authorList>
    </citation>
    <scope>ACETYLATION [LARGE SCALE ANALYSIS] AT SER-2</scope>
    <scope>CLEAVAGE OF INITIATOR METHIONINE [LARGE SCALE ANALYSIS]</scope>
    <scope>IDENTIFICATION BY MASS SPECTROMETRY [LARGE SCALE ANALYSIS]</scope>
</reference>
<protein>
    <recommendedName>
        <fullName>U3 small nucleolar RNA-associated protein MPP10</fullName>
        <shortName>U3 snoRNA-associated protein MPP10</shortName>
    </recommendedName>
    <alternativeName>
        <fullName>M phase phosphoprotein 10</fullName>
    </alternativeName>
</protein>
<sequence length="593" mass="66953">MSELFGVLKSNAGRIILKDPSATSKDVKAYIDSVINTCKNGSITKKAELDEITVDGLDANQVWWQVKLVLDSIDGDLIQGIQELKDVVTPSHNLSDGSTLNSSSGEESELEEAESVFKEKQMLSADVSEIEEQSNDSLSENDEEPSMDDEKTSAEAAREEFAEEKRISSGQDERHSSPDPYGINDKFFDLEKFNRDTLAAEDSNEASEGSEDEDIDYFQDMPSDDEEEEAIYYEDFFDKPTKEPVKKHSDVKDPKEDEELDEEEHDSAMDKVKLDLFADEEDEPNAEGVGEASDKNLSSFEKQQIEIRKQIEQLENEAVAEKKWSLKGEVKAKDRPEDALLTEELEFDRTAKPVPVITSEVTESLEDMIRRRIQDSNFDDLQRRTLLDITRKSQRPQFELSDVKSSKSLAEIYEDDYTRAEDESALSEELQKAHSEISELYANLVYKLDVLSSVHFVPKPASTSLEIRVETPTISMEDAQPLYMSNASSLAPQEIYNVGKAEKDGEIRLKNGVAMSKEELTREDKNRLRRALKRKRSKANLPNVNKRSKRNDVVDTLSKAKNITVINQKGEKKDVSGKTKKSRSGPDSTNIKL</sequence>
<feature type="initiator methionine" description="Removed" evidence="11">
    <location>
        <position position="1"/>
    </location>
</feature>
<feature type="chain" id="PRO_0000121534" description="U3 small nucleolar RNA-associated protein MPP10">
    <location>
        <begin position="2"/>
        <end position="593"/>
    </location>
</feature>
<feature type="region of interest" description="Disordered" evidence="1">
    <location>
        <begin position="90"/>
        <end position="297"/>
    </location>
</feature>
<feature type="region of interest" description="Disordered" evidence="1">
    <location>
        <begin position="564"/>
        <end position="593"/>
    </location>
</feature>
<feature type="compositionally biased region" description="Acidic residues" evidence="1">
    <location>
        <begin position="128"/>
        <end position="147"/>
    </location>
</feature>
<feature type="compositionally biased region" description="Basic and acidic residues" evidence="1">
    <location>
        <begin position="148"/>
        <end position="177"/>
    </location>
</feature>
<feature type="compositionally biased region" description="Basic and acidic residues" evidence="1">
    <location>
        <begin position="186"/>
        <end position="195"/>
    </location>
</feature>
<feature type="compositionally biased region" description="Acidic residues" evidence="1">
    <location>
        <begin position="202"/>
        <end position="232"/>
    </location>
</feature>
<feature type="compositionally biased region" description="Basic and acidic residues" evidence="1">
    <location>
        <begin position="236"/>
        <end position="255"/>
    </location>
</feature>
<feature type="compositionally biased region" description="Acidic residues" evidence="1">
    <location>
        <begin position="256"/>
        <end position="265"/>
    </location>
</feature>
<feature type="compositionally biased region" description="Basic and acidic residues" evidence="1">
    <location>
        <begin position="266"/>
        <end position="276"/>
    </location>
</feature>
<feature type="modified residue" description="N-acetylserine" evidence="11">
    <location>
        <position position="2"/>
    </location>
</feature>
<feature type="modified residue" description="Phosphoserine" evidence="8 9 10">
    <location>
        <position position="176"/>
    </location>
</feature>
<feature type="modified residue" description="Phosphoserine" evidence="8 9 10">
    <location>
        <position position="177"/>
    </location>
</feature>
<feature type="modified residue" description="Phosphotyrosine" evidence="10">
    <location>
        <position position="181"/>
    </location>
</feature>
<feature type="helix" evidence="12">
    <location>
        <begin position="430"/>
        <end position="451"/>
    </location>
</feature>
<gene>
    <name type="primary">MPP10</name>
    <name type="ordered locus">YJR002W</name>
    <name type="ORF">J1411</name>
    <name type="ORF">YJR83.5</name>
</gene>
<proteinExistence type="evidence at protein level"/>
<comment type="function">
    <text evidence="3 6">Involved in nucleolar processing of pre-18S ribosomal RNA. Required for the early cleavages at sites A0, A1 and A2 during 18S ribosomal pre-RNA processing.</text>
</comment>
<comment type="subunit">
    <text evidence="2 3 4 5">Component of a heterotrimeric complex containing IMP3, IMP4 and MPP10. Interacts with snoRNA U3. Component of the ribosomal small subunit (SSU) processome composed of at least 40 protein subunits and snoRNA U3. Interacts with the SSU processome subunits EMG1, IMP3, IMP4, KRR1, NOC4/UTP19, NOP1, RPS4A, RPS4B, RPS6A, RPS6B, RPS7A, RPS7B, RPS9A, RPS9B, RPS14A, RPS14B, UTP1-UTP18, UTP20-UTP22 and UTP25.</text>
</comment>
<comment type="interaction">
    <interactant intactId="EBI-11168">
        <id>P47083</id>
    </interactant>
    <interactant intactId="EBI-36432">
        <id>Q06631</id>
        <label>BFR2</label>
    </interactant>
    <organismsDiffer>false</organismsDiffer>
    <experiments>9</experiments>
</comment>
<comment type="interaction">
    <interactant intactId="EBI-11168">
        <id>P47083</id>
    </interactant>
    <interactant intactId="EBI-1820">
        <id>Q04217</id>
        <label>ECM16</label>
    </interactant>
    <organismsDiffer>false</organismsDiffer>
    <experiments>3</experiments>
</comment>
<comment type="interaction">
    <interactant intactId="EBI-11168">
        <id>P47083</id>
    </interactant>
    <interactant intactId="EBI-30765">
        <id>Q05498</id>
        <label>FCF1</label>
    </interactant>
    <organismsDiffer>false</organismsDiffer>
    <experiments>2</experiments>
</comment>
<comment type="interaction">
    <interactant intactId="EBI-11168">
        <id>P47083</id>
    </interactant>
    <interactant intactId="EBI-8170">
        <id>Q03532</id>
        <label>HAS1</label>
    </interactant>
    <organismsDiffer>false</organismsDiffer>
    <experiments>3</experiments>
</comment>
<comment type="interaction">
    <interactant intactId="EBI-11168">
        <id>P47083</id>
    </interactant>
    <interactant intactId="EBI-9237">
        <id>P32899</id>
        <label>IMP3</label>
    </interactant>
    <organismsDiffer>false</organismsDiffer>
    <experiments>8</experiments>
</comment>
<comment type="interaction">
    <interactant intactId="EBI-11168">
        <id>P47083</id>
    </interactant>
    <interactant intactId="EBI-9243">
        <id>P53941</id>
        <label>IMP4</label>
    </interactant>
    <organismsDiffer>false</organismsDiffer>
    <experiments>8</experiments>
</comment>
<comment type="interaction">
    <interactant intactId="EBI-11168">
        <id>P47083</id>
    </interactant>
    <interactant intactId="EBI-11168">
        <id>P47083</id>
        <label>MPP10</label>
    </interactant>
    <organismsDiffer>false</organismsDiffer>
    <experiments>2</experiments>
</comment>
<comment type="interaction">
    <interactant intactId="EBI-11168">
        <id>P47083</id>
    </interactant>
    <interactant intactId="EBI-35157">
        <id>Q99207</id>
        <label>NOP14</label>
    </interactant>
    <organismsDiffer>false</organismsDiffer>
    <experiments>7</experiments>
</comment>
<comment type="interaction">
    <interactant intactId="EBI-11168">
        <id>P47083</id>
    </interactant>
    <interactant intactId="EBI-36084">
        <id>Q12136</id>
        <label>SAS10</label>
    </interactant>
    <organismsDiffer>false</organismsDiffer>
    <experiments>11</experiments>
</comment>
<comment type="interaction">
    <interactant intactId="EBI-11168">
        <id>P47083</id>
    </interactant>
    <interactant intactId="EBI-1884">
        <id>P42945</id>
        <label>UTP10</label>
    </interactant>
    <organismsDiffer>false</organismsDiffer>
    <experiments>8</experiments>
</comment>
<comment type="interaction">
    <interactant intactId="EBI-11168">
        <id>P47083</id>
    </interactant>
    <interactant intactId="EBI-1878">
        <id>P53254</id>
        <label>UTP22</label>
    </interactant>
    <organismsDiffer>false</organismsDiffer>
    <experiments>5</experiments>
</comment>
<comment type="interaction">
    <interactant intactId="EBI-11168">
        <id>P47083</id>
    </interactant>
    <interactant intactId="EBI-25113">
        <id>P40498</id>
        <label>UTP25</label>
    </interactant>
    <organismsDiffer>false</organismsDiffer>
    <experiments>7</experiments>
</comment>
<comment type="interaction">
    <interactant intactId="EBI-11168">
        <id>P47083</id>
    </interactant>
    <interactant intactId="EBI-22119">
        <id>Q02354</id>
        <label>UTP6</label>
    </interactant>
    <organismsDiffer>false</organismsDiffer>
    <experiments>10</experiments>
</comment>
<comment type="interaction">
    <interactant intactId="EBI-11168">
        <id>P47083</id>
    </interactant>
    <interactant intactId="EBI-23301">
        <id>P53276</id>
        <label>UTP8</label>
    </interactant>
    <organismsDiffer>false</organismsDiffer>
    <experiments>6</experiments>
</comment>
<comment type="subcellular location">
    <subcellularLocation>
        <location evidence="2 6">Nucleus</location>
        <location evidence="2 6">Nucleolus</location>
    </subcellularLocation>
</comment>
<comment type="similarity">
    <text evidence="7">Belongs to the MPP10 family.</text>
</comment>
<keyword id="KW-0002">3D-structure</keyword>
<keyword id="KW-0007">Acetylation</keyword>
<keyword id="KW-0539">Nucleus</keyword>
<keyword id="KW-0597">Phosphoprotein</keyword>
<keyword id="KW-1185">Reference proteome</keyword>
<keyword id="KW-0687">Ribonucleoprotein</keyword>
<keyword id="KW-0690">Ribosome biogenesis</keyword>
<keyword id="KW-0698">rRNA processing</keyword>
<accession>P47083</accession>
<accession>D6VWH6</accession>
<evidence type="ECO:0000256" key="1">
    <source>
        <dbReference type="SAM" id="MobiDB-lite"/>
    </source>
</evidence>
<evidence type="ECO:0000269" key="2">
    <source>
    </source>
</evidence>
<evidence type="ECO:0000269" key="3">
    <source>
    </source>
</evidence>
<evidence type="ECO:0000269" key="4">
    <source>
    </source>
</evidence>
<evidence type="ECO:0000269" key="5">
    <source>
    </source>
</evidence>
<evidence type="ECO:0000269" key="6">
    <source>
    </source>
</evidence>
<evidence type="ECO:0000305" key="7"/>
<evidence type="ECO:0007744" key="8">
    <source>
    </source>
</evidence>
<evidence type="ECO:0007744" key="9">
    <source>
    </source>
</evidence>
<evidence type="ECO:0007744" key="10">
    <source>
    </source>
</evidence>
<evidence type="ECO:0007744" key="11">
    <source>
    </source>
</evidence>
<evidence type="ECO:0007829" key="12">
    <source>
        <dbReference type="PDB" id="5WXM"/>
    </source>
</evidence>